<organism>
    <name type="scientific">Lactiplantibacillus plantarum (strain ATCC BAA-793 / NCIMB 8826 / WCFS1)</name>
    <name type="common">Lactobacillus plantarum</name>
    <dbReference type="NCBI Taxonomy" id="220668"/>
    <lineage>
        <taxon>Bacteria</taxon>
        <taxon>Bacillati</taxon>
        <taxon>Bacillota</taxon>
        <taxon>Bacilli</taxon>
        <taxon>Lactobacillales</taxon>
        <taxon>Lactobacillaceae</taxon>
        <taxon>Lactiplantibacillus</taxon>
    </lineage>
</organism>
<sequence>MSAEYDLTIIGGGPVGMFAAFYAGMRNARVQLLESLPELGGQVQALYPEKIIHDVAGYPAIKGRELVAQLEKQLTQFPIDIQLASPVTDVTGAMGDFTITTASGQQSHSKAIIVATGSGAFEPRRLAVDNAAEFENKQLFYHIPSVKQFADRTVLVAGGGDSAIDMALMLEPVAKHVYIMHRRDRFRGMEHNVDLLKASSVEIKTPFLIKQLAETATGQLQLTMKEVRGTTEETLAVDDLIVNYGFIADNKVIRNWHVTPTMAHRLITVDTEMNTDVPGIAAIGDTVTYAGKLGLIASGFGEAPNAVNQLMMTLYPERRSPLHSTTVFEKM</sequence>
<evidence type="ECO:0000255" key="1">
    <source>
        <dbReference type="HAMAP-Rule" id="MF_01685"/>
    </source>
</evidence>
<comment type="catalytic activity">
    <reaction evidence="1">
        <text>2 reduced [2Fe-2S]-[ferredoxin] + NADP(+) + H(+) = 2 oxidized [2Fe-2S]-[ferredoxin] + NADPH</text>
        <dbReference type="Rhea" id="RHEA:20125"/>
        <dbReference type="Rhea" id="RHEA-COMP:10000"/>
        <dbReference type="Rhea" id="RHEA-COMP:10001"/>
        <dbReference type="ChEBI" id="CHEBI:15378"/>
        <dbReference type="ChEBI" id="CHEBI:33737"/>
        <dbReference type="ChEBI" id="CHEBI:33738"/>
        <dbReference type="ChEBI" id="CHEBI:57783"/>
        <dbReference type="ChEBI" id="CHEBI:58349"/>
        <dbReference type="EC" id="1.18.1.2"/>
    </reaction>
</comment>
<comment type="cofactor">
    <cofactor evidence="1">
        <name>FAD</name>
        <dbReference type="ChEBI" id="CHEBI:57692"/>
    </cofactor>
    <text evidence="1">Binds 1 FAD per subunit.</text>
</comment>
<comment type="subunit">
    <text evidence="1">Homodimer.</text>
</comment>
<comment type="similarity">
    <text evidence="1">Belongs to the ferredoxin--NADP reductase type 2 family.</text>
</comment>
<name>FENR_LACPL</name>
<proteinExistence type="inferred from homology"/>
<gene>
    <name type="ordered locus">lp_2585</name>
</gene>
<feature type="chain" id="PRO_0000364857" description="Ferredoxin--NADP reductase">
    <location>
        <begin position="1"/>
        <end position="331"/>
    </location>
</feature>
<feature type="binding site" evidence="1">
    <location>
        <position position="34"/>
    </location>
    <ligand>
        <name>FAD</name>
        <dbReference type="ChEBI" id="CHEBI:57692"/>
    </ligand>
</feature>
<feature type="binding site" evidence="1">
    <location>
        <position position="42"/>
    </location>
    <ligand>
        <name>FAD</name>
        <dbReference type="ChEBI" id="CHEBI:57692"/>
    </ligand>
</feature>
<feature type="binding site" evidence="1">
    <location>
        <position position="47"/>
    </location>
    <ligand>
        <name>FAD</name>
        <dbReference type="ChEBI" id="CHEBI:57692"/>
    </ligand>
</feature>
<feature type="binding site" evidence="1">
    <location>
        <position position="87"/>
    </location>
    <ligand>
        <name>FAD</name>
        <dbReference type="ChEBI" id="CHEBI:57692"/>
    </ligand>
</feature>
<feature type="binding site" evidence="1">
    <location>
        <position position="121"/>
    </location>
    <ligand>
        <name>FAD</name>
        <dbReference type="ChEBI" id="CHEBI:57692"/>
    </ligand>
</feature>
<feature type="binding site" evidence="1">
    <location>
        <position position="285"/>
    </location>
    <ligand>
        <name>FAD</name>
        <dbReference type="ChEBI" id="CHEBI:57692"/>
    </ligand>
</feature>
<feature type="binding site" evidence="1">
    <location>
        <position position="325"/>
    </location>
    <ligand>
        <name>FAD</name>
        <dbReference type="ChEBI" id="CHEBI:57692"/>
    </ligand>
</feature>
<accession>Q88UC0</accession>
<accession>F9UR95</accession>
<reference key="1">
    <citation type="journal article" date="2003" name="Proc. Natl. Acad. Sci. U.S.A.">
        <title>Complete genome sequence of Lactobacillus plantarum WCFS1.</title>
        <authorList>
            <person name="Kleerebezem M."/>
            <person name="Boekhorst J."/>
            <person name="van Kranenburg R."/>
            <person name="Molenaar D."/>
            <person name="Kuipers O.P."/>
            <person name="Leer R."/>
            <person name="Tarchini R."/>
            <person name="Peters S.A."/>
            <person name="Sandbrink H.M."/>
            <person name="Fiers M.W.E.J."/>
            <person name="Stiekema W."/>
            <person name="Klein Lankhorst R.M."/>
            <person name="Bron P.A."/>
            <person name="Hoffer S.M."/>
            <person name="Nierop Groot M.N."/>
            <person name="Kerkhoven R."/>
            <person name="De Vries M."/>
            <person name="Ursing B."/>
            <person name="De Vos W.M."/>
            <person name="Siezen R.J."/>
        </authorList>
    </citation>
    <scope>NUCLEOTIDE SEQUENCE [LARGE SCALE GENOMIC DNA]</scope>
    <source>
        <strain>ATCC BAA-793 / NCIMB 8826 / WCFS1</strain>
    </source>
</reference>
<reference key="2">
    <citation type="journal article" date="2012" name="J. Bacteriol.">
        <title>Complete resequencing and reannotation of the Lactobacillus plantarum WCFS1 genome.</title>
        <authorList>
            <person name="Siezen R.J."/>
            <person name="Francke C."/>
            <person name="Renckens B."/>
            <person name="Boekhorst J."/>
            <person name="Wels M."/>
            <person name="Kleerebezem M."/>
            <person name="van Hijum S.A."/>
        </authorList>
    </citation>
    <scope>NUCLEOTIDE SEQUENCE [LARGE SCALE GENOMIC DNA]</scope>
    <scope>GENOME REANNOTATION</scope>
    <source>
        <strain>ATCC BAA-793 / NCIMB 8826 / WCFS1</strain>
    </source>
</reference>
<keyword id="KW-0274">FAD</keyword>
<keyword id="KW-0285">Flavoprotein</keyword>
<keyword id="KW-0521">NADP</keyword>
<keyword id="KW-0560">Oxidoreductase</keyword>
<keyword id="KW-1185">Reference proteome</keyword>
<dbReference type="EC" id="1.18.1.2" evidence="1"/>
<dbReference type="EMBL" id="AL935263">
    <property type="protein sequence ID" value="CCC79734.1"/>
    <property type="molecule type" value="Genomic_DNA"/>
</dbReference>
<dbReference type="RefSeq" id="WP_003642692.1">
    <property type="nucleotide sequence ID" value="NC_004567.2"/>
</dbReference>
<dbReference type="RefSeq" id="YP_004890248.1">
    <property type="nucleotide sequence ID" value="NC_004567.2"/>
</dbReference>
<dbReference type="SMR" id="Q88UC0"/>
<dbReference type="STRING" id="220668.lp_2585"/>
<dbReference type="EnsemblBacteria" id="CCC79734">
    <property type="protein sequence ID" value="CCC79734"/>
    <property type="gene ID" value="lp_2585"/>
</dbReference>
<dbReference type="KEGG" id="lpl:lp_2585"/>
<dbReference type="PATRIC" id="fig|220668.9.peg.2170"/>
<dbReference type="eggNOG" id="COG0492">
    <property type="taxonomic scope" value="Bacteria"/>
</dbReference>
<dbReference type="HOGENOM" id="CLU_031864_5_5_9"/>
<dbReference type="OrthoDB" id="9806179at2"/>
<dbReference type="PhylomeDB" id="Q88UC0"/>
<dbReference type="Proteomes" id="UP000000432">
    <property type="component" value="Chromosome"/>
</dbReference>
<dbReference type="GO" id="GO:0004324">
    <property type="term" value="F:ferredoxin-NADP+ reductase activity"/>
    <property type="evidence" value="ECO:0007669"/>
    <property type="project" value="UniProtKB-UniRule"/>
</dbReference>
<dbReference type="GO" id="GO:0050660">
    <property type="term" value="F:flavin adenine dinucleotide binding"/>
    <property type="evidence" value="ECO:0007669"/>
    <property type="project" value="UniProtKB-UniRule"/>
</dbReference>
<dbReference type="GO" id="GO:0050661">
    <property type="term" value="F:NADP binding"/>
    <property type="evidence" value="ECO:0007669"/>
    <property type="project" value="UniProtKB-UniRule"/>
</dbReference>
<dbReference type="Gene3D" id="3.50.50.60">
    <property type="entry name" value="FAD/NAD(P)-binding domain"/>
    <property type="match status" value="2"/>
</dbReference>
<dbReference type="HAMAP" id="MF_01685">
    <property type="entry name" value="FENR2"/>
    <property type="match status" value="1"/>
</dbReference>
<dbReference type="InterPro" id="IPR036188">
    <property type="entry name" value="FAD/NAD-bd_sf"/>
</dbReference>
<dbReference type="InterPro" id="IPR023753">
    <property type="entry name" value="FAD/NAD-binding_dom"/>
</dbReference>
<dbReference type="InterPro" id="IPR022890">
    <property type="entry name" value="Fd--NADP_Rdtase_type_2"/>
</dbReference>
<dbReference type="InterPro" id="IPR050097">
    <property type="entry name" value="Ferredoxin-NADP_redctase_2"/>
</dbReference>
<dbReference type="PANTHER" id="PTHR48105">
    <property type="entry name" value="THIOREDOXIN REDUCTASE 1-RELATED-RELATED"/>
    <property type="match status" value="1"/>
</dbReference>
<dbReference type="Pfam" id="PF07992">
    <property type="entry name" value="Pyr_redox_2"/>
    <property type="match status" value="1"/>
</dbReference>
<dbReference type="PRINTS" id="PR00368">
    <property type="entry name" value="FADPNR"/>
</dbReference>
<dbReference type="PRINTS" id="PR00469">
    <property type="entry name" value="PNDRDTASEII"/>
</dbReference>
<dbReference type="SUPFAM" id="SSF51905">
    <property type="entry name" value="FAD/NAD(P)-binding domain"/>
    <property type="match status" value="1"/>
</dbReference>
<protein>
    <recommendedName>
        <fullName evidence="1">Ferredoxin--NADP reductase</fullName>
        <shortName evidence="1">FNR</shortName>
        <shortName evidence="1">Fd-NADP(+) reductase</shortName>
        <ecNumber evidence="1">1.18.1.2</ecNumber>
    </recommendedName>
</protein>